<keyword id="KW-0001">2Fe-2S</keyword>
<keyword id="KW-1015">Disulfide bond</keyword>
<keyword id="KW-0249">Electron transport</keyword>
<keyword id="KW-0408">Iron</keyword>
<keyword id="KW-0411">Iron-sulfur</keyword>
<keyword id="KW-0472">Membrane</keyword>
<keyword id="KW-0479">Metal-binding</keyword>
<keyword id="KW-0793">Thylakoid</keyword>
<keyword id="KW-1278">Translocase</keyword>
<keyword id="KW-0812">Transmembrane</keyword>
<keyword id="KW-1133">Transmembrane helix</keyword>
<keyword id="KW-0813">Transport</keyword>
<name>UCRI_PROMS</name>
<feature type="chain" id="PRO_0000298455" description="Cytochrome b6-f complex iron-sulfur subunit">
    <location>
        <begin position="1"/>
        <end position="178"/>
    </location>
</feature>
<feature type="transmembrane region" description="Helical" evidence="1">
    <location>
        <begin position="20"/>
        <end position="42"/>
    </location>
</feature>
<feature type="domain" description="Rieske" evidence="1">
    <location>
        <begin position="65"/>
        <end position="161"/>
    </location>
</feature>
<feature type="binding site" evidence="1">
    <location>
        <position position="107"/>
    </location>
    <ligand>
        <name>[2Fe-2S] cluster</name>
        <dbReference type="ChEBI" id="CHEBI:190135"/>
    </ligand>
</feature>
<feature type="binding site" evidence="1">
    <location>
        <position position="109"/>
    </location>
    <ligand>
        <name>[2Fe-2S] cluster</name>
        <dbReference type="ChEBI" id="CHEBI:190135"/>
    </ligand>
</feature>
<feature type="binding site" evidence="1">
    <location>
        <position position="125"/>
    </location>
    <ligand>
        <name>[2Fe-2S] cluster</name>
        <dbReference type="ChEBI" id="CHEBI:190135"/>
    </ligand>
</feature>
<feature type="binding site" evidence="1">
    <location>
        <position position="128"/>
    </location>
    <ligand>
        <name>[2Fe-2S] cluster</name>
        <dbReference type="ChEBI" id="CHEBI:190135"/>
    </ligand>
</feature>
<feature type="disulfide bond" evidence="1">
    <location>
        <begin position="112"/>
        <end position="127"/>
    </location>
</feature>
<reference key="1">
    <citation type="journal article" date="2007" name="PLoS Genet.">
        <title>Patterns and implications of gene gain and loss in the evolution of Prochlorococcus.</title>
        <authorList>
            <person name="Kettler G.C."/>
            <person name="Martiny A.C."/>
            <person name="Huang K."/>
            <person name="Zucker J."/>
            <person name="Coleman M.L."/>
            <person name="Rodrigue S."/>
            <person name="Chen F."/>
            <person name="Lapidus A."/>
            <person name="Ferriera S."/>
            <person name="Johnson J."/>
            <person name="Steglich C."/>
            <person name="Church G.M."/>
            <person name="Richardson P."/>
            <person name="Chisholm S.W."/>
        </authorList>
    </citation>
    <scope>NUCLEOTIDE SEQUENCE [LARGE SCALE GENOMIC DNA]</scope>
    <source>
        <strain>AS9601</strain>
    </source>
</reference>
<gene>
    <name evidence="1" type="primary">petC</name>
    <name type="ordered locus">A9601_05181</name>
</gene>
<comment type="function">
    <text evidence="1">Component of the cytochrome b6-f complex, which mediates electron transfer between photosystem II (PSII) and photosystem I (PSI), cyclic electron flow around PSI, and state transitions.</text>
</comment>
<comment type="catalytic activity">
    <reaction evidence="1">
        <text>2 oxidized [plastocyanin] + a plastoquinol + 2 H(+)(in) = 2 reduced [plastocyanin] + a plastoquinone + 4 H(+)(out)</text>
        <dbReference type="Rhea" id="RHEA:22148"/>
        <dbReference type="Rhea" id="RHEA-COMP:9561"/>
        <dbReference type="Rhea" id="RHEA-COMP:9562"/>
        <dbReference type="Rhea" id="RHEA-COMP:10039"/>
        <dbReference type="Rhea" id="RHEA-COMP:10040"/>
        <dbReference type="ChEBI" id="CHEBI:15378"/>
        <dbReference type="ChEBI" id="CHEBI:17757"/>
        <dbReference type="ChEBI" id="CHEBI:29036"/>
        <dbReference type="ChEBI" id="CHEBI:49552"/>
        <dbReference type="ChEBI" id="CHEBI:62192"/>
        <dbReference type="EC" id="7.1.1.6"/>
    </reaction>
</comment>
<comment type="cofactor">
    <cofactor evidence="1">
        <name>[2Fe-2S] cluster</name>
        <dbReference type="ChEBI" id="CHEBI:190135"/>
    </cofactor>
    <text evidence="1">Binds 1 [2Fe-2S] cluster per subunit.</text>
</comment>
<comment type="subunit">
    <text evidence="1">The 4 large subunits of the cytochrome b6-f complex are cytochrome b6, subunit IV (17 kDa polypeptide, PetD), cytochrome f and the Rieske protein, while the 4 small subunits are PetG, PetL, PetM and PetN. The complex functions as a dimer.</text>
</comment>
<comment type="subcellular location">
    <subcellularLocation>
        <location evidence="1">Cellular thylakoid membrane</location>
        <topology evidence="1">Single-pass membrane protein</topology>
    </subcellularLocation>
    <text evidence="1">The transmembrane helix obliquely spans the membrane in one monomer, and its extrinsic C-terminal domain is part of the other monomer.</text>
</comment>
<comment type="miscellaneous">
    <text>The Rieske iron-sulfur protein is a high potential 2Fe-2S protein.</text>
</comment>
<comment type="similarity">
    <text evidence="1">Belongs to the Rieske iron-sulfur protein family.</text>
</comment>
<dbReference type="EC" id="7.1.1.6" evidence="1"/>
<dbReference type="EMBL" id="CP000551">
    <property type="protein sequence ID" value="ABM69806.1"/>
    <property type="molecule type" value="Genomic_DNA"/>
</dbReference>
<dbReference type="RefSeq" id="WP_011817974.1">
    <property type="nucleotide sequence ID" value="NC_008816.1"/>
</dbReference>
<dbReference type="SMR" id="A2BPU5"/>
<dbReference type="STRING" id="146891.A9601_05181"/>
<dbReference type="KEGG" id="pmb:A9601_05181"/>
<dbReference type="eggNOG" id="COG0723">
    <property type="taxonomic scope" value="Bacteria"/>
</dbReference>
<dbReference type="HOGENOM" id="CLU_055690_8_0_3"/>
<dbReference type="OrthoDB" id="9767869at2"/>
<dbReference type="Proteomes" id="UP000002590">
    <property type="component" value="Chromosome"/>
</dbReference>
<dbReference type="GO" id="GO:0031676">
    <property type="term" value="C:plasma membrane-derived thylakoid membrane"/>
    <property type="evidence" value="ECO:0007669"/>
    <property type="project" value="UniProtKB-SubCell"/>
</dbReference>
<dbReference type="GO" id="GO:0051537">
    <property type="term" value="F:2 iron, 2 sulfur cluster binding"/>
    <property type="evidence" value="ECO:0007669"/>
    <property type="project" value="UniProtKB-KW"/>
</dbReference>
<dbReference type="GO" id="GO:0045158">
    <property type="term" value="F:electron transporter, transferring electrons within cytochrome b6/f complex of photosystem II activity"/>
    <property type="evidence" value="ECO:0007669"/>
    <property type="project" value="UniProtKB-UniRule"/>
</dbReference>
<dbReference type="GO" id="GO:0046872">
    <property type="term" value="F:metal ion binding"/>
    <property type="evidence" value="ECO:0007669"/>
    <property type="project" value="UniProtKB-KW"/>
</dbReference>
<dbReference type="GO" id="GO:0004497">
    <property type="term" value="F:monooxygenase activity"/>
    <property type="evidence" value="ECO:0007669"/>
    <property type="project" value="UniProtKB-ARBA"/>
</dbReference>
<dbReference type="GO" id="GO:0016705">
    <property type="term" value="F:oxidoreductase activity, acting on paired donors, with incorporation or reduction of molecular oxygen"/>
    <property type="evidence" value="ECO:0007669"/>
    <property type="project" value="UniProtKB-ARBA"/>
</dbReference>
<dbReference type="GO" id="GO:0009496">
    <property type="term" value="F:plastoquinol--plastocyanin reductase activity"/>
    <property type="evidence" value="ECO:0007669"/>
    <property type="project" value="UniProtKB-UniRule"/>
</dbReference>
<dbReference type="GO" id="GO:0015979">
    <property type="term" value="P:photosynthesis"/>
    <property type="evidence" value="ECO:0007669"/>
    <property type="project" value="UniProtKB-UniRule"/>
</dbReference>
<dbReference type="CDD" id="cd03471">
    <property type="entry name" value="Rieske_cytochrome_b6f"/>
    <property type="match status" value="1"/>
</dbReference>
<dbReference type="FunFam" id="2.102.10.10:FF:000007">
    <property type="entry name" value="Cytochrome b6-f complex iron-sulfur subunit"/>
    <property type="match status" value="1"/>
</dbReference>
<dbReference type="Gene3D" id="2.102.10.10">
    <property type="entry name" value="Rieske [2Fe-2S] iron-sulphur domain"/>
    <property type="match status" value="1"/>
</dbReference>
<dbReference type="Gene3D" id="1.20.5.700">
    <property type="entry name" value="Single helix bin"/>
    <property type="match status" value="1"/>
</dbReference>
<dbReference type="HAMAP" id="MF_01335">
    <property type="entry name" value="Cytb6_f_Rieske"/>
    <property type="match status" value="1"/>
</dbReference>
<dbReference type="InterPro" id="IPR023960">
    <property type="entry name" value="Cyt_b6_f_Rieske"/>
</dbReference>
<dbReference type="InterPro" id="IPR017941">
    <property type="entry name" value="Rieske_2Fe-2S"/>
</dbReference>
<dbReference type="InterPro" id="IPR036922">
    <property type="entry name" value="Rieske_2Fe-2S_sf"/>
</dbReference>
<dbReference type="InterPro" id="IPR014349">
    <property type="entry name" value="Rieske_Fe-S_prot"/>
</dbReference>
<dbReference type="InterPro" id="IPR005805">
    <property type="entry name" value="Rieske_Fe-S_prot_C"/>
</dbReference>
<dbReference type="InterPro" id="IPR006311">
    <property type="entry name" value="TAT_signal"/>
</dbReference>
<dbReference type="NCBIfam" id="NF045928">
    <property type="entry name" value="Cytb6fFeSPetC"/>
    <property type="match status" value="1"/>
</dbReference>
<dbReference type="NCBIfam" id="NF010001">
    <property type="entry name" value="PRK13474.1"/>
    <property type="match status" value="1"/>
</dbReference>
<dbReference type="PANTHER" id="PTHR10134">
    <property type="entry name" value="CYTOCHROME B-C1 COMPLEX SUBUNIT RIESKE, MITOCHONDRIAL"/>
    <property type="match status" value="1"/>
</dbReference>
<dbReference type="Pfam" id="PF00355">
    <property type="entry name" value="Rieske"/>
    <property type="match status" value="1"/>
</dbReference>
<dbReference type="Pfam" id="PF25471">
    <property type="entry name" value="TM_PetC"/>
    <property type="match status" value="1"/>
</dbReference>
<dbReference type="PRINTS" id="PR00162">
    <property type="entry name" value="RIESKE"/>
</dbReference>
<dbReference type="SUPFAM" id="SSF50022">
    <property type="entry name" value="ISP domain"/>
    <property type="match status" value="1"/>
</dbReference>
<dbReference type="PROSITE" id="PS51296">
    <property type="entry name" value="RIESKE"/>
    <property type="match status" value="1"/>
</dbReference>
<dbReference type="PROSITE" id="PS51318">
    <property type="entry name" value="TAT"/>
    <property type="match status" value="1"/>
</dbReference>
<organism>
    <name type="scientific">Prochlorococcus marinus (strain AS9601)</name>
    <dbReference type="NCBI Taxonomy" id="146891"/>
    <lineage>
        <taxon>Bacteria</taxon>
        <taxon>Bacillati</taxon>
        <taxon>Cyanobacteriota</taxon>
        <taxon>Cyanophyceae</taxon>
        <taxon>Synechococcales</taxon>
        <taxon>Prochlorococcaceae</taxon>
        <taxon>Prochlorococcus</taxon>
    </lineage>
</organism>
<proteinExistence type="inferred from homology"/>
<sequence length="178" mass="18938">MTQLSSNDVPSMGRRQFMNLLTFGTATGVALGALYPVANYFMPLRAGGGGGGTSAKDELGNPITKTGWLATHQAGDRSLVQGLKGDPTYLIVNEGGEIGEFGLNAICTHLGCVVPWDSGANKFICPCHGSQYDTNGKVVRGPAPLSLALAHVDIEDDAVLVKQWSETDFRTNENPWWA</sequence>
<accession>A2BPU5</accession>
<protein>
    <recommendedName>
        <fullName evidence="1">Cytochrome b6-f complex iron-sulfur subunit</fullName>
        <ecNumber evidence="1">7.1.1.6</ecNumber>
    </recommendedName>
    <alternativeName>
        <fullName evidence="1">Plastohydroquinone:plastocyanin oxidoreductase iron-sulfur protein</fullName>
        <shortName evidence="1">ISP</shortName>
        <shortName evidence="1">RISP</shortName>
    </alternativeName>
    <alternativeName>
        <fullName evidence="1">Rieske iron-sulfur protein</fullName>
    </alternativeName>
</protein>
<evidence type="ECO:0000255" key="1">
    <source>
        <dbReference type="HAMAP-Rule" id="MF_01335"/>
    </source>
</evidence>